<organism>
    <name type="scientific">Brucella abortus (strain 2308)</name>
    <dbReference type="NCBI Taxonomy" id="359391"/>
    <lineage>
        <taxon>Bacteria</taxon>
        <taxon>Pseudomonadati</taxon>
        <taxon>Pseudomonadota</taxon>
        <taxon>Alphaproteobacteria</taxon>
        <taxon>Hyphomicrobiales</taxon>
        <taxon>Brucellaceae</taxon>
        <taxon>Brucella/Ochrobactrum group</taxon>
        <taxon>Brucella</taxon>
    </lineage>
</organism>
<comment type="function">
    <text evidence="1">The glycine cleavage system catalyzes the degradation of glycine. The H protein shuttles the methylamine group of glycine from the P protein to the T protein.</text>
</comment>
<comment type="cofactor">
    <cofactor evidence="1">
        <name>(R)-lipoate</name>
        <dbReference type="ChEBI" id="CHEBI:83088"/>
    </cofactor>
    <text evidence="1">Binds 1 lipoyl cofactor covalently.</text>
</comment>
<comment type="subunit">
    <text evidence="1">The glycine cleavage system is composed of four proteins: P, T, L and H.</text>
</comment>
<comment type="similarity">
    <text evidence="1">Belongs to the GcvH family.</text>
</comment>
<reference key="1">
    <citation type="journal article" date="2005" name="Infect. Immun.">
        <title>Whole-genome analyses of speciation events in pathogenic Brucellae.</title>
        <authorList>
            <person name="Chain P.S."/>
            <person name="Comerci D.J."/>
            <person name="Tolmasky M.E."/>
            <person name="Larimer F.W."/>
            <person name="Malfatti S.A."/>
            <person name="Vergez L.M."/>
            <person name="Aguero F."/>
            <person name="Land M.L."/>
            <person name="Ugalde R.A."/>
            <person name="Garcia E."/>
        </authorList>
    </citation>
    <scope>NUCLEOTIDE SEQUENCE [LARGE SCALE GENOMIC DNA]</scope>
    <source>
        <strain>2308</strain>
    </source>
</reference>
<accession>Q2YKY0</accession>
<sequence>MISMANILFTEDHEWINVENGVATVGITIHAQEQLGDLVFVELPEVGRTVAKGDGVVVVESVKAASDVYAPVDGEVVEVNDAVASDPSLINQAAEGEGWLFKLKLADEGQLTGLLDKAGYEKLIG</sequence>
<dbReference type="EMBL" id="AM040265">
    <property type="protein sequence ID" value="CAJ12680.1"/>
    <property type="molecule type" value="Genomic_DNA"/>
</dbReference>
<dbReference type="SMR" id="Q2YKY0"/>
<dbReference type="STRING" id="359391.BAB2_0514"/>
<dbReference type="KEGG" id="bmf:BAB2_0514"/>
<dbReference type="HOGENOM" id="CLU_097408_2_2_5"/>
<dbReference type="Proteomes" id="UP000002719">
    <property type="component" value="Chromosome II"/>
</dbReference>
<dbReference type="GO" id="GO:0005829">
    <property type="term" value="C:cytosol"/>
    <property type="evidence" value="ECO:0007669"/>
    <property type="project" value="TreeGrafter"/>
</dbReference>
<dbReference type="GO" id="GO:0005960">
    <property type="term" value="C:glycine cleavage complex"/>
    <property type="evidence" value="ECO:0007669"/>
    <property type="project" value="InterPro"/>
</dbReference>
<dbReference type="GO" id="GO:0019464">
    <property type="term" value="P:glycine decarboxylation via glycine cleavage system"/>
    <property type="evidence" value="ECO:0007669"/>
    <property type="project" value="UniProtKB-UniRule"/>
</dbReference>
<dbReference type="CDD" id="cd06848">
    <property type="entry name" value="GCS_H"/>
    <property type="match status" value="1"/>
</dbReference>
<dbReference type="Gene3D" id="2.40.50.100">
    <property type="match status" value="1"/>
</dbReference>
<dbReference type="HAMAP" id="MF_00272">
    <property type="entry name" value="GcvH"/>
    <property type="match status" value="1"/>
</dbReference>
<dbReference type="InterPro" id="IPR003016">
    <property type="entry name" value="2-oxoA_DH_lipoyl-BS"/>
</dbReference>
<dbReference type="InterPro" id="IPR000089">
    <property type="entry name" value="Biotin_lipoyl"/>
</dbReference>
<dbReference type="InterPro" id="IPR002930">
    <property type="entry name" value="GCV_H"/>
</dbReference>
<dbReference type="InterPro" id="IPR033753">
    <property type="entry name" value="GCV_H/Fam206"/>
</dbReference>
<dbReference type="InterPro" id="IPR017453">
    <property type="entry name" value="GCV_H_sub"/>
</dbReference>
<dbReference type="InterPro" id="IPR011053">
    <property type="entry name" value="Single_hybrid_motif"/>
</dbReference>
<dbReference type="NCBIfam" id="TIGR00527">
    <property type="entry name" value="gcvH"/>
    <property type="match status" value="1"/>
</dbReference>
<dbReference type="NCBIfam" id="NF002270">
    <property type="entry name" value="PRK01202.1"/>
    <property type="match status" value="1"/>
</dbReference>
<dbReference type="PANTHER" id="PTHR11715">
    <property type="entry name" value="GLYCINE CLEAVAGE SYSTEM H PROTEIN"/>
    <property type="match status" value="1"/>
</dbReference>
<dbReference type="PANTHER" id="PTHR11715:SF3">
    <property type="entry name" value="GLYCINE CLEAVAGE SYSTEM H PROTEIN-RELATED"/>
    <property type="match status" value="1"/>
</dbReference>
<dbReference type="Pfam" id="PF01597">
    <property type="entry name" value="GCV_H"/>
    <property type="match status" value="1"/>
</dbReference>
<dbReference type="SUPFAM" id="SSF51230">
    <property type="entry name" value="Single hybrid motif"/>
    <property type="match status" value="1"/>
</dbReference>
<dbReference type="PROSITE" id="PS50968">
    <property type="entry name" value="BIOTINYL_LIPOYL"/>
    <property type="match status" value="1"/>
</dbReference>
<dbReference type="PROSITE" id="PS00189">
    <property type="entry name" value="LIPOYL"/>
    <property type="match status" value="1"/>
</dbReference>
<feature type="chain" id="PRO_0000302359" description="Glycine cleavage system H protein">
    <location>
        <begin position="1"/>
        <end position="125"/>
    </location>
</feature>
<feature type="domain" description="Lipoyl-binding" evidence="2">
    <location>
        <begin position="22"/>
        <end position="104"/>
    </location>
</feature>
<feature type="modified residue" description="N6-lipoyllysine" evidence="1">
    <location>
        <position position="63"/>
    </location>
</feature>
<name>GCSH_BRUA2</name>
<proteinExistence type="inferred from homology"/>
<evidence type="ECO:0000255" key="1">
    <source>
        <dbReference type="HAMAP-Rule" id="MF_00272"/>
    </source>
</evidence>
<evidence type="ECO:0000255" key="2">
    <source>
        <dbReference type="PROSITE-ProRule" id="PRU01066"/>
    </source>
</evidence>
<gene>
    <name evidence="1" type="primary">gcvH</name>
    <name type="ordered locus">BAB2_0514</name>
</gene>
<keyword id="KW-0450">Lipoyl</keyword>
<keyword id="KW-1185">Reference proteome</keyword>
<protein>
    <recommendedName>
        <fullName evidence="1">Glycine cleavage system H protein</fullName>
    </recommendedName>
</protein>